<evidence type="ECO:0000255" key="1">
    <source>
        <dbReference type="HAMAP-Rule" id="MF_00823"/>
    </source>
</evidence>
<evidence type="ECO:0000255" key="2">
    <source>
        <dbReference type="PROSITE-ProRule" id="PRU01137"/>
    </source>
</evidence>
<gene>
    <name evidence="1" type="primary">accA</name>
    <name type="ordered locus">CCNA_03090</name>
</gene>
<accession>B8H2N7</accession>
<protein>
    <recommendedName>
        <fullName evidence="1">Acetyl-coenzyme A carboxylase carboxyl transferase subunit alpha</fullName>
        <shortName evidence="1">ACCase subunit alpha</shortName>
        <shortName evidence="1">Acetyl-CoA carboxylase carboxyltransferase subunit alpha</shortName>
        <ecNumber evidence="1">2.1.3.15</ecNumber>
    </recommendedName>
</protein>
<name>ACCA_CAUVN</name>
<proteinExistence type="inferred from homology"/>
<dbReference type="EC" id="2.1.3.15" evidence="1"/>
<dbReference type="EMBL" id="CP001340">
    <property type="protein sequence ID" value="ACL96555.1"/>
    <property type="molecule type" value="Genomic_DNA"/>
</dbReference>
<dbReference type="RefSeq" id="WP_010920832.1">
    <property type="nucleotide sequence ID" value="NC_011916.1"/>
</dbReference>
<dbReference type="RefSeq" id="YP_002518463.1">
    <property type="nucleotide sequence ID" value="NC_011916.1"/>
</dbReference>
<dbReference type="SMR" id="B8H2N7"/>
<dbReference type="GeneID" id="7333544"/>
<dbReference type="KEGG" id="ccs:CCNA_03090"/>
<dbReference type="PATRIC" id="fig|565050.3.peg.3018"/>
<dbReference type="HOGENOM" id="CLU_015486_0_2_5"/>
<dbReference type="OrthoDB" id="9808023at2"/>
<dbReference type="PhylomeDB" id="B8H2N7"/>
<dbReference type="UniPathway" id="UPA00655">
    <property type="reaction ID" value="UER00711"/>
</dbReference>
<dbReference type="Proteomes" id="UP000001364">
    <property type="component" value="Chromosome"/>
</dbReference>
<dbReference type="GO" id="GO:0009317">
    <property type="term" value="C:acetyl-CoA carboxylase complex"/>
    <property type="evidence" value="ECO:0007669"/>
    <property type="project" value="InterPro"/>
</dbReference>
<dbReference type="GO" id="GO:0003989">
    <property type="term" value="F:acetyl-CoA carboxylase activity"/>
    <property type="evidence" value="ECO:0007669"/>
    <property type="project" value="InterPro"/>
</dbReference>
<dbReference type="GO" id="GO:0005524">
    <property type="term" value="F:ATP binding"/>
    <property type="evidence" value="ECO:0007669"/>
    <property type="project" value="UniProtKB-KW"/>
</dbReference>
<dbReference type="GO" id="GO:0016743">
    <property type="term" value="F:carboxyl- or carbamoyltransferase activity"/>
    <property type="evidence" value="ECO:0007669"/>
    <property type="project" value="UniProtKB-UniRule"/>
</dbReference>
<dbReference type="GO" id="GO:0006633">
    <property type="term" value="P:fatty acid biosynthetic process"/>
    <property type="evidence" value="ECO:0007669"/>
    <property type="project" value="UniProtKB-KW"/>
</dbReference>
<dbReference type="GO" id="GO:2001295">
    <property type="term" value="P:malonyl-CoA biosynthetic process"/>
    <property type="evidence" value="ECO:0007669"/>
    <property type="project" value="UniProtKB-UniRule"/>
</dbReference>
<dbReference type="Gene3D" id="3.90.226.10">
    <property type="entry name" value="2-enoyl-CoA Hydratase, Chain A, domain 1"/>
    <property type="match status" value="1"/>
</dbReference>
<dbReference type="HAMAP" id="MF_00823">
    <property type="entry name" value="AcetylCoA_CT_alpha"/>
    <property type="match status" value="1"/>
</dbReference>
<dbReference type="InterPro" id="IPR001095">
    <property type="entry name" value="Acetyl_CoA_COase_a_su"/>
</dbReference>
<dbReference type="InterPro" id="IPR029045">
    <property type="entry name" value="ClpP/crotonase-like_dom_sf"/>
</dbReference>
<dbReference type="InterPro" id="IPR011763">
    <property type="entry name" value="COA_CT_C"/>
</dbReference>
<dbReference type="NCBIfam" id="TIGR00513">
    <property type="entry name" value="accA"/>
    <property type="match status" value="1"/>
</dbReference>
<dbReference type="NCBIfam" id="NF041504">
    <property type="entry name" value="AccA_sub"/>
    <property type="match status" value="1"/>
</dbReference>
<dbReference type="NCBIfam" id="NF004344">
    <property type="entry name" value="PRK05724.1"/>
    <property type="match status" value="1"/>
</dbReference>
<dbReference type="PANTHER" id="PTHR42853">
    <property type="entry name" value="ACETYL-COENZYME A CARBOXYLASE CARBOXYL TRANSFERASE SUBUNIT ALPHA"/>
    <property type="match status" value="1"/>
</dbReference>
<dbReference type="PANTHER" id="PTHR42853:SF3">
    <property type="entry name" value="ACETYL-COENZYME A CARBOXYLASE CARBOXYL TRANSFERASE SUBUNIT ALPHA, CHLOROPLASTIC"/>
    <property type="match status" value="1"/>
</dbReference>
<dbReference type="Pfam" id="PF03255">
    <property type="entry name" value="ACCA"/>
    <property type="match status" value="1"/>
</dbReference>
<dbReference type="PRINTS" id="PR01069">
    <property type="entry name" value="ACCCTRFRASEA"/>
</dbReference>
<dbReference type="SUPFAM" id="SSF52096">
    <property type="entry name" value="ClpP/crotonase"/>
    <property type="match status" value="1"/>
</dbReference>
<dbReference type="PROSITE" id="PS50989">
    <property type="entry name" value="COA_CT_CTER"/>
    <property type="match status" value="1"/>
</dbReference>
<feature type="chain" id="PRO_1000148736" description="Acetyl-coenzyme A carboxylase carboxyl transferase subunit alpha">
    <location>
        <begin position="1"/>
        <end position="320"/>
    </location>
</feature>
<feature type="domain" description="CoA carboxyltransferase C-terminal" evidence="2">
    <location>
        <begin position="33"/>
        <end position="294"/>
    </location>
</feature>
<sequence>MAAHYLDFERPIADLESKIEELSRLSETAGPGAFDTEIQALRDRAQELRKEAYANLDAWQKTMVARHPQRPHLRDYVAGLIDEFVELRGDRKFADDQAIVGGLGRFRGQPVVVMGHEKGHDTTTRLKHNFGMARPEGYRKAVRLMDMAERFNLPVITFVDTAGAYPGLGAEERGQAEAIARSTERCLTLGVPMVATIVGEGGSGGAIALAGANRVLILEHSIYSVISPEGAASILWRDGARAKDAATQMRITAQDLIKLGIVDRIVEEPAGGAHSDTEAAIQAVGDAVEDELKAMAAMSPAELKKQRSDRFYAIGRAGLQ</sequence>
<comment type="function">
    <text evidence="1">Component of the acetyl coenzyme A carboxylase (ACC) complex. First, biotin carboxylase catalyzes the carboxylation of biotin on its carrier protein (BCCP) and then the CO(2) group is transferred by the carboxyltransferase to acetyl-CoA to form malonyl-CoA.</text>
</comment>
<comment type="catalytic activity">
    <reaction evidence="1">
        <text>N(6)-carboxybiotinyl-L-lysyl-[protein] + acetyl-CoA = N(6)-biotinyl-L-lysyl-[protein] + malonyl-CoA</text>
        <dbReference type="Rhea" id="RHEA:54728"/>
        <dbReference type="Rhea" id="RHEA-COMP:10505"/>
        <dbReference type="Rhea" id="RHEA-COMP:10506"/>
        <dbReference type="ChEBI" id="CHEBI:57288"/>
        <dbReference type="ChEBI" id="CHEBI:57384"/>
        <dbReference type="ChEBI" id="CHEBI:83144"/>
        <dbReference type="ChEBI" id="CHEBI:83145"/>
        <dbReference type="EC" id="2.1.3.15"/>
    </reaction>
</comment>
<comment type="pathway">
    <text evidence="1">Lipid metabolism; malonyl-CoA biosynthesis; malonyl-CoA from acetyl-CoA: step 1/1.</text>
</comment>
<comment type="subunit">
    <text evidence="1">Acetyl-CoA carboxylase is a heterohexamer composed of biotin carboxyl carrier protein (AccB), biotin carboxylase (AccC) and two subunits each of ACCase subunit alpha (AccA) and ACCase subunit beta (AccD).</text>
</comment>
<comment type="subcellular location">
    <subcellularLocation>
        <location evidence="1">Cytoplasm</location>
    </subcellularLocation>
</comment>
<comment type="similarity">
    <text evidence="1">Belongs to the AccA family.</text>
</comment>
<keyword id="KW-0067">ATP-binding</keyword>
<keyword id="KW-0963">Cytoplasm</keyword>
<keyword id="KW-0275">Fatty acid biosynthesis</keyword>
<keyword id="KW-0276">Fatty acid metabolism</keyword>
<keyword id="KW-0444">Lipid biosynthesis</keyword>
<keyword id="KW-0443">Lipid metabolism</keyword>
<keyword id="KW-0547">Nucleotide-binding</keyword>
<keyword id="KW-1185">Reference proteome</keyword>
<keyword id="KW-0808">Transferase</keyword>
<reference key="1">
    <citation type="journal article" date="2010" name="J. Bacteriol.">
        <title>The genetic basis of laboratory adaptation in Caulobacter crescentus.</title>
        <authorList>
            <person name="Marks M.E."/>
            <person name="Castro-Rojas C.M."/>
            <person name="Teiling C."/>
            <person name="Du L."/>
            <person name="Kapatral V."/>
            <person name="Walunas T.L."/>
            <person name="Crosson S."/>
        </authorList>
    </citation>
    <scope>NUCLEOTIDE SEQUENCE [LARGE SCALE GENOMIC DNA]</scope>
    <source>
        <strain>NA1000 / CB15N</strain>
    </source>
</reference>
<organism>
    <name type="scientific">Caulobacter vibrioides (strain NA1000 / CB15N)</name>
    <name type="common">Caulobacter crescentus</name>
    <dbReference type="NCBI Taxonomy" id="565050"/>
    <lineage>
        <taxon>Bacteria</taxon>
        <taxon>Pseudomonadati</taxon>
        <taxon>Pseudomonadota</taxon>
        <taxon>Alphaproteobacteria</taxon>
        <taxon>Caulobacterales</taxon>
        <taxon>Caulobacteraceae</taxon>
        <taxon>Caulobacter</taxon>
    </lineage>
</organism>